<reference key="1">
    <citation type="submission" date="2003-10" db="EMBL/GenBank/DDBJ databases">
        <title>61 primate SINEs and the evolution of strepsirrhines.</title>
        <authorList>
            <person name="Roos C."/>
            <person name="Schmitz J."/>
            <person name="Zischler H."/>
        </authorList>
    </citation>
    <scope>NUCLEOTIDE SEQUENCE [GENOMIC DNA]</scope>
</reference>
<evidence type="ECO:0000250" key="1"/>
<evidence type="ECO:0000250" key="2">
    <source>
        <dbReference type="UniProtKB" id="P00157"/>
    </source>
</evidence>
<evidence type="ECO:0000255" key="3">
    <source>
        <dbReference type="PROSITE-ProRule" id="PRU00967"/>
    </source>
</evidence>
<evidence type="ECO:0000255" key="4">
    <source>
        <dbReference type="PROSITE-ProRule" id="PRU00968"/>
    </source>
</evidence>
<feature type="chain" id="PRO_0000060654" description="Cytochrome b">
    <location>
        <begin position="1"/>
        <end position="379"/>
    </location>
</feature>
<feature type="transmembrane region" description="Helical" evidence="2">
    <location>
        <begin position="33"/>
        <end position="53"/>
    </location>
</feature>
<feature type="transmembrane region" description="Helical" evidence="2">
    <location>
        <begin position="77"/>
        <end position="98"/>
    </location>
</feature>
<feature type="transmembrane region" description="Helical" evidence="2">
    <location>
        <begin position="113"/>
        <end position="133"/>
    </location>
</feature>
<feature type="transmembrane region" description="Helical" evidence="2">
    <location>
        <begin position="178"/>
        <end position="198"/>
    </location>
</feature>
<feature type="transmembrane region" description="Helical" evidence="2">
    <location>
        <begin position="226"/>
        <end position="246"/>
    </location>
</feature>
<feature type="transmembrane region" description="Helical" evidence="2">
    <location>
        <begin position="288"/>
        <end position="308"/>
    </location>
</feature>
<feature type="transmembrane region" description="Helical" evidence="2">
    <location>
        <begin position="320"/>
        <end position="340"/>
    </location>
</feature>
<feature type="transmembrane region" description="Helical" evidence="2">
    <location>
        <begin position="347"/>
        <end position="367"/>
    </location>
</feature>
<feature type="binding site" description="axial binding residue" evidence="2">
    <location>
        <position position="83"/>
    </location>
    <ligand>
        <name>heme b</name>
        <dbReference type="ChEBI" id="CHEBI:60344"/>
        <label>b562</label>
    </ligand>
    <ligandPart>
        <name>Fe</name>
        <dbReference type="ChEBI" id="CHEBI:18248"/>
    </ligandPart>
</feature>
<feature type="binding site" description="axial binding residue" evidence="2">
    <location>
        <position position="97"/>
    </location>
    <ligand>
        <name>heme b</name>
        <dbReference type="ChEBI" id="CHEBI:60344"/>
        <label>b566</label>
    </ligand>
    <ligandPart>
        <name>Fe</name>
        <dbReference type="ChEBI" id="CHEBI:18248"/>
    </ligandPart>
</feature>
<feature type="binding site" description="axial binding residue" evidence="2">
    <location>
        <position position="182"/>
    </location>
    <ligand>
        <name>heme b</name>
        <dbReference type="ChEBI" id="CHEBI:60344"/>
        <label>b562</label>
    </ligand>
    <ligandPart>
        <name>Fe</name>
        <dbReference type="ChEBI" id="CHEBI:18248"/>
    </ligandPart>
</feature>
<feature type="binding site" description="axial binding residue" evidence="2">
    <location>
        <position position="196"/>
    </location>
    <ligand>
        <name>heme b</name>
        <dbReference type="ChEBI" id="CHEBI:60344"/>
        <label>b566</label>
    </ligand>
    <ligandPart>
        <name>Fe</name>
        <dbReference type="ChEBI" id="CHEBI:18248"/>
    </ligandPart>
</feature>
<feature type="binding site" evidence="2">
    <location>
        <position position="201"/>
    </location>
    <ligand>
        <name>a ubiquinone</name>
        <dbReference type="ChEBI" id="CHEBI:16389"/>
    </ligand>
</feature>
<sequence>MTNIRKIHPLMKIMNNSFIDLPTPSNISSWWNFGSLLGACLALQIVTGLFLAMHYTADTTTAFSSVTHICRDVNYGWIIRYLHANGASMFFLCLFIHVGRGLYYGSFTLSETWNIGITLLLTVMATAFMGYVLPWGQMSFWGATVITNLLSAIPYIGSNLVEWIWGGFSVDKATLTRFFAFHFILPFIITALAAIHLLFLHETGSNNPLGISSNPDKIPFHPYYVTKDLLGAVLLTLLLMTLVLFFPDLLGDPDNYTPANPLNTPPHIKPEWYFLFAYAILRSIPNKLGGVLALISSILILAIIPLLQTTKRQSMMFRPLSQCLFWILVADLCTLTWIVGQPVENPFISIGQTASILYFSLILIIMPTVSLVENKMLKW</sequence>
<comment type="function">
    <text evidence="2">Component of the ubiquinol-cytochrome c reductase complex (complex III or cytochrome b-c1 complex) that is part of the mitochondrial respiratory chain. The b-c1 complex mediates electron transfer from ubiquinol to cytochrome c. Contributes to the generation of a proton gradient across the mitochondrial membrane that is then used for ATP synthesis.</text>
</comment>
<comment type="cofactor">
    <cofactor evidence="2">
        <name>heme b</name>
        <dbReference type="ChEBI" id="CHEBI:60344"/>
    </cofactor>
    <text evidence="2">Binds 2 heme b groups non-covalently.</text>
</comment>
<comment type="subunit">
    <text evidence="2">The cytochrome bc1 complex contains 11 subunits: 3 respiratory subunits (MT-CYB, CYC1 and UQCRFS1), 2 core proteins (UQCRC1 and UQCRC2) and 6 low-molecular weight proteins (UQCRH/QCR6, UQCRB/QCR7, UQCRQ/QCR8, UQCR10/QCR9, UQCR11/QCR10 and a cleavage product of UQCRFS1). This cytochrome bc1 complex then forms a dimer.</text>
</comment>
<comment type="subcellular location">
    <subcellularLocation>
        <location evidence="2">Mitochondrion inner membrane</location>
        <topology evidence="2">Multi-pass membrane protein</topology>
    </subcellularLocation>
</comment>
<comment type="miscellaneous">
    <text evidence="1">Heme 1 (or BL or b562) is low-potential and absorbs at about 562 nm, and heme 2 (or BH or b566) is high-potential and absorbs at about 566 nm.</text>
</comment>
<comment type="similarity">
    <text evidence="3 4">Belongs to the cytochrome b family.</text>
</comment>
<comment type="caution">
    <text evidence="2">The full-length protein contains only eight transmembrane helices, not nine as predicted by bioinformatics tools.</text>
</comment>
<proteinExistence type="inferred from homology"/>
<name>CYB_AVAOC</name>
<gene>
    <name type="primary">MT-CYB</name>
    <name type="synonym">COB</name>
    <name type="synonym">CYTB</name>
    <name type="synonym">MTCYB</name>
</gene>
<dbReference type="EMBL" id="AY441454">
    <property type="protein sequence ID" value="AAS00135.1"/>
    <property type="molecule type" value="Genomic_DNA"/>
</dbReference>
<dbReference type="SMR" id="Q5VJ59"/>
<dbReference type="GO" id="GO:0005743">
    <property type="term" value="C:mitochondrial inner membrane"/>
    <property type="evidence" value="ECO:0007669"/>
    <property type="project" value="UniProtKB-SubCell"/>
</dbReference>
<dbReference type="GO" id="GO:0045275">
    <property type="term" value="C:respiratory chain complex III"/>
    <property type="evidence" value="ECO:0007669"/>
    <property type="project" value="InterPro"/>
</dbReference>
<dbReference type="GO" id="GO:0046872">
    <property type="term" value="F:metal ion binding"/>
    <property type="evidence" value="ECO:0007669"/>
    <property type="project" value="UniProtKB-KW"/>
</dbReference>
<dbReference type="GO" id="GO:0008121">
    <property type="term" value="F:ubiquinol-cytochrome-c reductase activity"/>
    <property type="evidence" value="ECO:0007669"/>
    <property type="project" value="InterPro"/>
</dbReference>
<dbReference type="GO" id="GO:0006122">
    <property type="term" value="P:mitochondrial electron transport, ubiquinol to cytochrome c"/>
    <property type="evidence" value="ECO:0007669"/>
    <property type="project" value="TreeGrafter"/>
</dbReference>
<dbReference type="CDD" id="cd00290">
    <property type="entry name" value="cytochrome_b_C"/>
    <property type="match status" value="1"/>
</dbReference>
<dbReference type="CDD" id="cd00284">
    <property type="entry name" value="Cytochrome_b_N"/>
    <property type="match status" value="1"/>
</dbReference>
<dbReference type="FunFam" id="1.20.810.10:FF:000002">
    <property type="entry name" value="Cytochrome b"/>
    <property type="match status" value="1"/>
</dbReference>
<dbReference type="Gene3D" id="1.20.810.10">
    <property type="entry name" value="Cytochrome Bc1 Complex, Chain C"/>
    <property type="match status" value="1"/>
</dbReference>
<dbReference type="InterPro" id="IPR005798">
    <property type="entry name" value="Cyt_b/b6_C"/>
</dbReference>
<dbReference type="InterPro" id="IPR036150">
    <property type="entry name" value="Cyt_b/b6_C_sf"/>
</dbReference>
<dbReference type="InterPro" id="IPR005797">
    <property type="entry name" value="Cyt_b/b6_N"/>
</dbReference>
<dbReference type="InterPro" id="IPR027387">
    <property type="entry name" value="Cytb/b6-like_sf"/>
</dbReference>
<dbReference type="InterPro" id="IPR030689">
    <property type="entry name" value="Cytochrome_b"/>
</dbReference>
<dbReference type="InterPro" id="IPR048260">
    <property type="entry name" value="Cytochrome_b_C_euk/bac"/>
</dbReference>
<dbReference type="InterPro" id="IPR048259">
    <property type="entry name" value="Cytochrome_b_N_euk/bac"/>
</dbReference>
<dbReference type="InterPro" id="IPR016174">
    <property type="entry name" value="Di-haem_cyt_TM"/>
</dbReference>
<dbReference type="PANTHER" id="PTHR19271">
    <property type="entry name" value="CYTOCHROME B"/>
    <property type="match status" value="1"/>
</dbReference>
<dbReference type="PANTHER" id="PTHR19271:SF16">
    <property type="entry name" value="CYTOCHROME B"/>
    <property type="match status" value="1"/>
</dbReference>
<dbReference type="Pfam" id="PF00032">
    <property type="entry name" value="Cytochrom_B_C"/>
    <property type="match status" value="1"/>
</dbReference>
<dbReference type="Pfam" id="PF00033">
    <property type="entry name" value="Cytochrome_B"/>
    <property type="match status" value="1"/>
</dbReference>
<dbReference type="PIRSF" id="PIRSF038885">
    <property type="entry name" value="COB"/>
    <property type="match status" value="1"/>
</dbReference>
<dbReference type="SUPFAM" id="SSF81648">
    <property type="entry name" value="a domain/subunit of cytochrome bc1 complex (Ubiquinol-cytochrome c reductase)"/>
    <property type="match status" value="1"/>
</dbReference>
<dbReference type="SUPFAM" id="SSF81342">
    <property type="entry name" value="Transmembrane di-heme cytochromes"/>
    <property type="match status" value="1"/>
</dbReference>
<dbReference type="PROSITE" id="PS51003">
    <property type="entry name" value="CYTB_CTER"/>
    <property type="match status" value="1"/>
</dbReference>
<dbReference type="PROSITE" id="PS51002">
    <property type="entry name" value="CYTB_NTER"/>
    <property type="match status" value="1"/>
</dbReference>
<protein>
    <recommendedName>
        <fullName>Cytochrome b</fullName>
    </recommendedName>
    <alternativeName>
        <fullName>Complex III subunit 3</fullName>
    </alternativeName>
    <alternativeName>
        <fullName>Complex III subunit III</fullName>
    </alternativeName>
    <alternativeName>
        <fullName>Cytochrome b-c1 complex subunit 3</fullName>
    </alternativeName>
    <alternativeName>
        <fullName>Ubiquinol-cytochrome-c reductase complex cytochrome b subunit</fullName>
    </alternativeName>
</protein>
<organism>
    <name type="scientific">Avahi occidentalis</name>
    <name type="common">Western woolly lemur</name>
    <dbReference type="NCBI Taxonomy" id="132108"/>
    <lineage>
        <taxon>Eukaryota</taxon>
        <taxon>Metazoa</taxon>
        <taxon>Chordata</taxon>
        <taxon>Craniata</taxon>
        <taxon>Vertebrata</taxon>
        <taxon>Euteleostomi</taxon>
        <taxon>Mammalia</taxon>
        <taxon>Eutheria</taxon>
        <taxon>Euarchontoglires</taxon>
        <taxon>Primates</taxon>
        <taxon>Strepsirrhini</taxon>
        <taxon>Lemuriformes</taxon>
        <taxon>Indriidae</taxon>
        <taxon>Avahi</taxon>
    </lineage>
</organism>
<geneLocation type="mitochondrion"/>
<keyword id="KW-0249">Electron transport</keyword>
<keyword id="KW-0349">Heme</keyword>
<keyword id="KW-0408">Iron</keyword>
<keyword id="KW-0472">Membrane</keyword>
<keyword id="KW-0479">Metal-binding</keyword>
<keyword id="KW-0496">Mitochondrion</keyword>
<keyword id="KW-0999">Mitochondrion inner membrane</keyword>
<keyword id="KW-0679">Respiratory chain</keyword>
<keyword id="KW-0812">Transmembrane</keyword>
<keyword id="KW-1133">Transmembrane helix</keyword>
<keyword id="KW-0813">Transport</keyword>
<keyword id="KW-0830">Ubiquinone</keyword>
<accession>Q5VJ59</accession>